<accession>Q1H0N6</accession>
<sequence>MHIHVLGSAAGGGFPQWNCNCPNCDGLRKGTIKAKKRTQSSICVSADGINWVLFNTSPDILQQIQEFAPLQPGRAIRDSGIVGIVLIDAQIDHTTGLLMLREGQVKREIYCTDMVYQDLTTGNPLLNILDHYCGVNRHDIPIDGKHSFSVEHAPGLRFTAVALKSAAPPYSPHRHDPHPGDTIGVLIEDLNNGKKAFYAPGLGEIEPHLPALMEQADCIMVDGTFWTDTEMLDMGLMSKKARDIGHNPQSGPGGMMEVLDGYPGARRVLIHINNTNPILREDSAERVELTRRGIEVAYDGMDIIL</sequence>
<protein>
    <recommendedName>
        <fullName evidence="1">Coenzyme PQQ synthesis protein B</fullName>
    </recommendedName>
    <alternativeName>
        <fullName evidence="1">Pyrroloquinoline quinone biosynthesis protein B</fullName>
    </alternativeName>
</protein>
<reference key="1">
    <citation type="submission" date="2006-03" db="EMBL/GenBank/DDBJ databases">
        <title>Complete sequence of Methylobacillus flagellatus KT.</title>
        <authorList>
            <consortium name="US DOE Joint Genome Institute"/>
            <person name="Copeland A."/>
            <person name="Lucas S."/>
            <person name="Lapidus A."/>
            <person name="Barry K."/>
            <person name="Detter J.C."/>
            <person name="Glavina del Rio T."/>
            <person name="Hammon N."/>
            <person name="Israni S."/>
            <person name="Dalin E."/>
            <person name="Tice H."/>
            <person name="Pitluck S."/>
            <person name="Brettin T."/>
            <person name="Bruce D."/>
            <person name="Han C."/>
            <person name="Tapia R."/>
            <person name="Saunders E."/>
            <person name="Gilna P."/>
            <person name="Schmutz J."/>
            <person name="Larimer F."/>
            <person name="Land M."/>
            <person name="Kyrpides N."/>
            <person name="Anderson I."/>
            <person name="Richardson P."/>
        </authorList>
    </citation>
    <scope>NUCLEOTIDE SEQUENCE [LARGE SCALE GENOMIC DNA]</scope>
    <source>
        <strain>ATCC 51484 / DSM 6875 / VKM B-1610 / KT</strain>
    </source>
</reference>
<evidence type="ECO:0000255" key="1">
    <source>
        <dbReference type="HAMAP-Rule" id="MF_00653"/>
    </source>
</evidence>
<organism>
    <name type="scientific">Methylobacillus flagellatus (strain ATCC 51484 / DSM 6875 / VKM B-1610 / KT)</name>
    <dbReference type="NCBI Taxonomy" id="265072"/>
    <lineage>
        <taxon>Bacteria</taxon>
        <taxon>Pseudomonadati</taxon>
        <taxon>Pseudomonadota</taxon>
        <taxon>Betaproteobacteria</taxon>
        <taxon>Nitrosomonadales</taxon>
        <taxon>Methylophilaceae</taxon>
        <taxon>Methylobacillus</taxon>
    </lineage>
</organism>
<feature type="chain" id="PRO_1000061649" description="Coenzyme PQQ synthesis protein B">
    <location>
        <begin position="1"/>
        <end position="305"/>
    </location>
</feature>
<name>PQQB_METFK</name>
<proteinExistence type="inferred from homology"/>
<comment type="function">
    <text evidence="1">May be involved in the transport of PQQ or its precursor to the periplasm.</text>
</comment>
<comment type="pathway">
    <text evidence="1">Cofactor biosynthesis; pyrroloquinoline quinone biosynthesis.</text>
</comment>
<comment type="similarity">
    <text evidence="1">Belongs to the PqqB family.</text>
</comment>
<gene>
    <name evidence="1" type="primary">pqqB</name>
    <name type="ordered locus">Mfla_1683</name>
</gene>
<dbReference type="EMBL" id="CP000284">
    <property type="protein sequence ID" value="ABE49951.1"/>
    <property type="molecule type" value="Genomic_DNA"/>
</dbReference>
<dbReference type="RefSeq" id="WP_011479905.1">
    <property type="nucleotide sequence ID" value="NC_007947.1"/>
</dbReference>
<dbReference type="SMR" id="Q1H0N6"/>
<dbReference type="STRING" id="265072.Mfla_1683"/>
<dbReference type="KEGG" id="mfa:Mfla_1683"/>
<dbReference type="eggNOG" id="COG1235">
    <property type="taxonomic scope" value="Bacteria"/>
</dbReference>
<dbReference type="HOGENOM" id="CLU_061120_0_0_4"/>
<dbReference type="OrthoDB" id="9778305at2"/>
<dbReference type="UniPathway" id="UPA00539"/>
<dbReference type="Proteomes" id="UP000002440">
    <property type="component" value="Chromosome"/>
</dbReference>
<dbReference type="GO" id="GO:0018189">
    <property type="term" value="P:pyrroloquinoline quinone biosynthetic process"/>
    <property type="evidence" value="ECO:0007669"/>
    <property type="project" value="UniProtKB-UniRule"/>
</dbReference>
<dbReference type="CDD" id="cd16274">
    <property type="entry name" value="PQQB-like_MBL-fold"/>
    <property type="match status" value="1"/>
</dbReference>
<dbReference type="Gene3D" id="3.60.15.10">
    <property type="entry name" value="Ribonuclease Z/Hydroxyacylglutathione hydrolase-like"/>
    <property type="match status" value="1"/>
</dbReference>
<dbReference type="HAMAP" id="MF_00653">
    <property type="entry name" value="PQQ_syn_PqqB"/>
    <property type="match status" value="1"/>
</dbReference>
<dbReference type="InterPro" id="IPR001279">
    <property type="entry name" value="Metallo-B-lactamas"/>
</dbReference>
<dbReference type="InterPro" id="IPR011842">
    <property type="entry name" value="PQQ_synth_PqqB"/>
</dbReference>
<dbReference type="InterPro" id="IPR036866">
    <property type="entry name" value="RibonucZ/Hydroxyglut_hydro"/>
</dbReference>
<dbReference type="NCBIfam" id="TIGR02108">
    <property type="entry name" value="PQQ_syn_pqqB"/>
    <property type="match status" value="1"/>
</dbReference>
<dbReference type="PANTHER" id="PTHR42663:SF7">
    <property type="entry name" value="COENZYME PQQ SYNTHESIS PROTEIN B"/>
    <property type="match status" value="1"/>
</dbReference>
<dbReference type="PANTHER" id="PTHR42663">
    <property type="entry name" value="HYDROLASE C777.06C-RELATED-RELATED"/>
    <property type="match status" value="1"/>
</dbReference>
<dbReference type="Pfam" id="PF12706">
    <property type="entry name" value="Lactamase_B_2"/>
    <property type="match status" value="1"/>
</dbReference>
<dbReference type="SUPFAM" id="SSF56281">
    <property type="entry name" value="Metallo-hydrolase/oxidoreductase"/>
    <property type="match status" value="1"/>
</dbReference>
<keyword id="KW-0884">PQQ biosynthesis</keyword>
<keyword id="KW-1185">Reference proteome</keyword>
<keyword id="KW-0813">Transport</keyword>